<accession>Q1R6S9</accession>
<sequence>MKVTLPEFERAGVMVVGDVMLDRYWYGPTSRISPEAPVPVVKVNTIEERPGGAANVAMNIASLGANARLVGLTGIDDAARALSKSLADVNVKCDFVSVPTHPTITKLRVLSRNQQLIRLDFEEGFEGVDPQPLHERINQALSSIGALVLSDYAKGALASVQQMIQLARKAGVPVLIDPKGTDFERYRGATLLTPNLSEFEAVVGKCKTEEEIVERGMKLIADYELSALLVTRSEQGMSLLQPGKAPLHMPTQAQEVYDVTGAGDTVIGVLAATLAAGNSLEEACFFANAAAGVVVGKLGTSTVSPIELENAVRGRADTGFGVMTEEELKLAVAAARKRGEKVVMTNGVFDILHAGHVSYLANARKLGDRLIVAVNSDASTKRLKGDSRPVNPLEQRMIVLGALEAVDWVVSFEEDTPQRLIAGILPDLLVKGGDYKPEEIAGSKEVWANGGEVLVLNFEDGCSTTNIIKKIQLDKKG</sequence>
<dbReference type="EC" id="2.7.1.167" evidence="1"/>
<dbReference type="EC" id="2.7.7.70" evidence="1"/>
<dbReference type="EMBL" id="CP000243">
    <property type="protein sequence ID" value="ABE08935.1"/>
    <property type="molecule type" value="Genomic_DNA"/>
</dbReference>
<dbReference type="RefSeq" id="WP_000869177.1">
    <property type="nucleotide sequence ID" value="NZ_CP064825.1"/>
</dbReference>
<dbReference type="SMR" id="Q1R6S9"/>
<dbReference type="KEGG" id="eci:UTI89_C3488"/>
<dbReference type="HOGENOM" id="CLU_021150_2_1_6"/>
<dbReference type="UniPathway" id="UPA00356">
    <property type="reaction ID" value="UER00437"/>
</dbReference>
<dbReference type="UniPathway" id="UPA00356">
    <property type="reaction ID" value="UER00439"/>
</dbReference>
<dbReference type="Proteomes" id="UP000001952">
    <property type="component" value="Chromosome"/>
</dbReference>
<dbReference type="GO" id="GO:0005829">
    <property type="term" value="C:cytosol"/>
    <property type="evidence" value="ECO:0007669"/>
    <property type="project" value="TreeGrafter"/>
</dbReference>
<dbReference type="GO" id="GO:0005524">
    <property type="term" value="F:ATP binding"/>
    <property type="evidence" value="ECO:0007669"/>
    <property type="project" value="UniProtKB-UniRule"/>
</dbReference>
<dbReference type="GO" id="GO:0033785">
    <property type="term" value="F:heptose 7-phosphate kinase activity"/>
    <property type="evidence" value="ECO:0007669"/>
    <property type="project" value="UniProtKB-UniRule"/>
</dbReference>
<dbReference type="GO" id="GO:0033786">
    <property type="term" value="F:heptose-1-phosphate adenylyltransferase activity"/>
    <property type="evidence" value="ECO:0007669"/>
    <property type="project" value="UniProtKB-UniRule"/>
</dbReference>
<dbReference type="GO" id="GO:0016773">
    <property type="term" value="F:phosphotransferase activity, alcohol group as acceptor"/>
    <property type="evidence" value="ECO:0007669"/>
    <property type="project" value="InterPro"/>
</dbReference>
<dbReference type="GO" id="GO:0097171">
    <property type="term" value="P:ADP-L-glycero-beta-D-manno-heptose biosynthetic process"/>
    <property type="evidence" value="ECO:0007669"/>
    <property type="project" value="UniProtKB-UniPathway"/>
</dbReference>
<dbReference type="CDD" id="cd01172">
    <property type="entry name" value="RfaE_like"/>
    <property type="match status" value="1"/>
</dbReference>
<dbReference type="FunFam" id="3.40.1190.20:FF:000002">
    <property type="entry name" value="Bifunctional protein HldE"/>
    <property type="match status" value="1"/>
</dbReference>
<dbReference type="FunFam" id="3.40.50.620:FF:000028">
    <property type="entry name" value="Bifunctional protein HldE"/>
    <property type="match status" value="1"/>
</dbReference>
<dbReference type="Gene3D" id="3.40.1190.20">
    <property type="match status" value="1"/>
</dbReference>
<dbReference type="Gene3D" id="3.40.50.620">
    <property type="entry name" value="HUPs"/>
    <property type="match status" value="1"/>
</dbReference>
<dbReference type="HAMAP" id="MF_01603">
    <property type="entry name" value="HldE"/>
    <property type="match status" value="1"/>
</dbReference>
<dbReference type="InterPro" id="IPR023030">
    <property type="entry name" value="Bifunc_HldE"/>
</dbReference>
<dbReference type="InterPro" id="IPR002173">
    <property type="entry name" value="Carboh/pur_kinase_PfkB_CS"/>
</dbReference>
<dbReference type="InterPro" id="IPR004821">
    <property type="entry name" value="Cyt_trans-like"/>
</dbReference>
<dbReference type="InterPro" id="IPR011611">
    <property type="entry name" value="PfkB_dom"/>
</dbReference>
<dbReference type="InterPro" id="IPR011913">
    <property type="entry name" value="RfaE_dom_I"/>
</dbReference>
<dbReference type="InterPro" id="IPR011914">
    <property type="entry name" value="RfaE_dom_II"/>
</dbReference>
<dbReference type="InterPro" id="IPR029056">
    <property type="entry name" value="Ribokinase-like"/>
</dbReference>
<dbReference type="InterPro" id="IPR014729">
    <property type="entry name" value="Rossmann-like_a/b/a_fold"/>
</dbReference>
<dbReference type="NCBIfam" id="TIGR00125">
    <property type="entry name" value="cyt_tran_rel"/>
    <property type="match status" value="1"/>
</dbReference>
<dbReference type="NCBIfam" id="NF008454">
    <property type="entry name" value="PRK11316.1"/>
    <property type="match status" value="1"/>
</dbReference>
<dbReference type="NCBIfam" id="TIGR02198">
    <property type="entry name" value="rfaE_dom_I"/>
    <property type="match status" value="1"/>
</dbReference>
<dbReference type="NCBIfam" id="TIGR02199">
    <property type="entry name" value="rfaE_dom_II"/>
    <property type="match status" value="1"/>
</dbReference>
<dbReference type="PANTHER" id="PTHR46969">
    <property type="entry name" value="BIFUNCTIONAL PROTEIN HLDE"/>
    <property type="match status" value="1"/>
</dbReference>
<dbReference type="PANTHER" id="PTHR46969:SF1">
    <property type="entry name" value="BIFUNCTIONAL PROTEIN HLDE"/>
    <property type="match status" value="1"/>
</dbReference>
<dbReference type="Pfam" id="PF01467">
    <property type="entry name" value="CTP_transf_like"/>
    <property type="match status" value="1"/>
</dbReference>
<dbReference type="Pfam" id="PF00294">
    <property type="entry name" value="PfkB"/>
    <property type="match status" value="1"/>
</dbReference>
<dbReference type="SUPFAM" id="SSF52374">
    <property type="entry name" value="Nucleotidylyl transferase"/>
    <property type="match status" value="1"/>
</dbReference>
<dbReference type="SUPFAM" id="SSF53613">
    <property type="entry name" value="Ribokinase-like"/>
    <property type="match status" value="1"/>
</dbReference>
<dbReference type="PROSITE" id="PS00583">
    <property type="entry name" value="PFKB_KINASES_1"/>
    <property type="match status" value="1"/>
</dbReference>
<feature type="chain" id="PRO_0000255757" description="Bifunctional protein HldE">
    <location>
        <begin position="1"/>
        <end position="477"/>
    </location>
</feature>
<feature type="region of interest" description="Ribokinase">
    <location>
        <begin position="1"/>
        <end position="318"/>
    </location>
</feature>
<feature type="region of interest" description="Cytidylyltransferase">
    <location>
        <begin position="344"/>
        <end position="477"/>
    </location>
</feature>
<feature type="active site" evidence="1">
    <location>
        <position position="264"/>
    </location>
</feature>
<feature type="binding site" evidence="1">
    <location>
        <begin position="195"/>
        <end position="198"/>
    </location>
    <ligand>
        <name>ATP</name>
        <dbReference type="ChEBI" id="CHEBI:30616"/>
    </ligand>
</feature>
<feature type="modified residue" description="N6-acetyllysine" evidence="1">
    <location>
        <position position="179"/>
    </location>
</feature>
<reference key="1">
    <citation type="journal article" date="2006" name="Proc. Natl. Acad. Sci. U.S.A.">
        <title>Identification of genes subject to positive selection in uropathogenic strains of Escherichia coli: a comparative genomics approach.</title>
        <authorList>
            <person name="Chen S.L."/>
            <person name="Hung C.-S."/>
            <person name="Xu J."/>
            <person name="Reigstad C.S."/>
            <person name="Magrini V."/>
            <person name="Sabo A."/>
            <person name="Blasiar D."/>
            <person name="Bieri T."/>
            <person name="Meyer R.R."/>
            <person name="Ozersky P."/>
            <person name="Armstrong J.R."/>
            <person name="Fulton R.S."/>
            <person name="Latreille J.P."/>
            <person name="Spieth J."/>
            <person name="Hooton T.M."/>
            <person name="Mardis E.R."/>
            <person name="Hultgren S.J."/>
            <person name="Gordon J.I."/>
        </authorList>
    </citation>
    <scope>NUCLEOTIDE SEQUENCE [LARGE SCALE GENOMIC DNA]</scope>
    <source>
        <strain>UTI89 / UPEC</strain>
    </source>
</reference>
<gene>
    <name evidence="1" type="primary">hldE</name>
    <name type="ordered locus">UTI89_C3488</name>
</gene>
<evidence type="ECO:0000255" key="1">
    <source>
        <dbReference type="HAMAP-Rule" id="MF_01603"/>
    </source>
</evidence>
<proteinExistence type="inferred from homology"/>
<name>HLDE_ECOUT</name>
<organism>
    <name type="scientific">Escherichia coli (strain UTI89 / UPEC)</name>
    <dbReference type="NCBI Taxonomy" id="364106"/>
    <lineage>
        <taxon>Bacteria</taxon>
        <taxon>Pseudomonadati</taxon>
        <taxon>Pseudomonadota</taxon>
        <taxon>Gammaproteobacteria</taxon>
        <taxon>Enterobacterales</taxon>
        <taxon>Enterobacteriaceae</taxon>
        <taxon>Escherichia</taxon>
    </lineage>
</organism>
<comment type="function">
    <text evidence="1">Catalyzes the phosphorylation of D-glycero-D-manno-heptose 7-phosphate at the C-1 position to selectively form D-glycero-beta-D-manno-heptose-1,7-bisphosphate.</text>
</comment>
<comment type="function">
    <text evidence="1">Catalyzes the ADP transfer from ATP to D-glycero-beta-D-manno-heptose 1-phosphate, yielding ADP-D-glycero-beta-D-manno-heptose.</text>
</comment>
<comment type="catalytic activity">
    <reaction evidence="1">
        <text>D-glycero-beta-D-manno-heptose 7-phosphate + ATP = D-glycero-beta-D-manno-heptose 1,7-bisphosphate + ADP + H(+)</text>
        <dbReference type="Rhea" id="RHEA:27473"/>
        <dbReference type="ChEBI" id="CHEBI:15378"/>
        <dbReference type="ChEBI" id="CHEBI:30616"/>
        <dbReference type="ChEBI" id="CHEBI:60204"/>
        <dbReference type="ChEBI" id="CHEBI:60208"/>
        <dbReference type="ChEBI" id="CHEBI:456216"/>
        <dbReference type="EC" id="2.7.1.167"/>
    </reaction>
</comment>
<comment type="catalytic activity">
    <reaction evidence="1">
        <text>D-glycero-beta-D-manno-heptose 1-phosphate + ATP + H(+) = ADP-D-glycero-beta-D-manno-heptose + diphosphate</text>
        <dbReference type="Rhea" id="RHEA:27465"/>
        <dbReference type="ChEBI" id="CHEBI:15378"/>
        <dbReference type="ChEBI" id="CHEBI:30616"/>
        <dbReference type="ChEBI" id="CHEBI:33019"/>
        <dbReference type="ChEBI" id="CHEBI:59967"/>
        <dbReference type="ChEBI" id="CHEBI:61593"/>
        <dbReference type="EC" id="2.7.7.70"/>
    </reaction>
</comment>
<comment type="pathway">
    <text evidence="1">Nucleotide-sugar biosynthesis; ADP-L-glycero-beta-D-manno-heptose biosynthesis; ADP-L-glycero-beta-D-manno-heptose from D-glycero-beta-D-manno-heptose 7-phosphate: step 1/4.</text>
</comment>
<comment type="pathway">
    <text evidence="1">Nucleotide-sugar biosynthesis; ADP-L-glycero-beta-D-manno-heptose biosynthesis; ADP-L-glycero-beta-D-manno-heptose from D-glycero-beta-D-manno-heptose 7-phosphate: step 3/4.</text>
</comment>
<comment type="subunit">
    <text evidence="1">Homodimer.</text>
</comment>
<comment type="similarity">
    <text evidence="1">In the N-terminal section; belongs to the carbohydrate kinase PfkB family.</text>
</comment>
<comment type="similarity">
    <text evidence="1">In the C-terminal section; belongs to the cytidylyltransferase family.</text>
</comment>
<protein>
    <recommendedName>
        <fullName evidence="1">Bifunctional protein HldE</fullName>
    </recommendedName>
    <domain>
        <recommendedName>
            <fullName evidence="1">D-beta-D-heptose 7-phosphate kinase</fullName>
            <ecNumber evidence="1">2.7.1.167</ecNumber>
        </recommendedName>
        <alternativeName>
            <fullName evidence="1">D-beta-D-heptose 7-phosphotransferase</fullName>
        </alternativeName>
        <alternativeName>
            <fullName evidence="1">D-glycero-beta-D-manno-heptose-7-phosphate kinase</fullName>
        </alternativeName>
    </domain>
    <domain>
        <recommendedName>
            <fullName evidence="1">D-beta-D-heptose 1-phosphate adenylyltransferase</fullName>
            <ecNumber evidence="1">2.7.7.70</ecNumber>
        </recommendedName>
        <alternativeName>
            <fullName evidence="1">D-glycero-beta-D-manno-heptose 1-phosphate adenylyltransferase</fullName>
        </alternativeName>
    </domain>
</protein>
<keyword id="KW-0007">Acetylation</keyword>
<keyword id="KW-0067">ATP-binding</keyword>
<keyword id="KW-0119">Carbohydrate metabolism</keyword>
<keyword id="KW-0418">Kinase</keyword>
<keyword id="KW-0511">Multifunctional enzyme</keyword>
<keyword id="KW-0547">Nucleotide-binding</keyword>
<keyword id="KW-0548">Nucleotidyltransferase</keyword>
<keyword id="KW-0808">Transferase</keyword>